<keyword id="KW-0067">ATP-binding</keyword>
<keyword id="KW-0963">Cytoplasm</keyword>
<keyword id="KW-0418">Kinase</keyword>
<keyword id="KW-0547">Nucleotide-binding</keyword>
<keyword id="KW-0665">Pyrimidine biosynthesis</keyword>
<keyword id="KW-1185">Reference proteome</keyword>
<keyword id="KW-0808">Transferase</keyword>
<gene>
    <name evidence="1" type="primary">pyrH</name>
    <name type="ordered locus">TWT_447</name>
</gene>
<feature type="chain" id="PRO_0000323979" description="Uridylate kinase">
    <location>
        <begin position="1"/>
        <end position="231"/>
    </location>
</feature>
<feature type="binding site" evidence="1">
    <location>
        <begin position="9"/>
        <end position="12"/>
    </location>
    <ligand>
        <name>ATP</name>
        <dbReference type="ChEBI" id="CHEBI:30616"/>
    </ligand>
</feature>
<feature type="binding site" evidence="1">
    <location>
        <position position="49"/>
    </location>
    <ligand>
        <name>UMP</name>
        <dbReference type="ChEBI" id="CHEBI:57865"/>
    </ligand>
</feature>
<feature type="binding site" evidence="1">
    <location>
        <position position="50"/>
    </location>
    <ligand>
        <name>ATP</name>
        <dbReference type="ChEBI" id="CHEBI:30616"/>
    </ligand>
</feature>
<feature type="binding site" evidence="1">
    <location>
        <position position="54"/>
    </location>
    <ligand>
        <name>ATP</name>
        <dbReference type="ChEBI" id="CHEBI:30616"/>
    </ligand>
</feature>
<feature type="binding site" evidence="1">
    <location>
        <position position="69"/>
    </location>
    <ligand>
        <name>UMP</name>
        <dbReference type="ChEBI" id="CHEBI:57865"/>
    </ligand>
</feature>
<feature type="binding site" evidence="1">
    <location>
        <begin position="130"/>
        <end position="137"/>
    </location>
    <ligand>
        <name>UMP</name>
        <dbReference type="ChEBI" id="CHEBI:57865"/>
    </ligand>
</feature>
<feature type="binding site" evidence="1">
    <location>
        <position position="158"/>
    </location>
    <ligand>
        <name>ATP</name>
        <dbReference type="ChEBI" id="CHEBI:30616"/>
    </ligand>
</feature>
<feature type="binding site" evidence="1">
    <location>
        <position position="164"/>
    </location>
    <ligand>
        <name>ATP</name>
        <dbReference type="ChEBI" id="CHEBI:30616"/>
    </ligand>
</feature>
<feature type="binding site" evidence="1">
    <location>
        <position position="167"/>
    </location>
    <ligand>
        <name>ATP</name>
        <dbReference type="ChEBI" id="CHEBI:30616"/>
    </ligand>
</feature>
<comment type="function">
    <text evidence="1">Catalyzes the reversible phosphorylation of UMP to UDP.</text>
</comment>
<comment type="catalytic activity">
    <reaction evidence="1">
        <text>UMP + ATP = UDP + ADP</text>
        <dbReference type="Rhea" id="RHEA:24400"/>
        <dbReference type="ChEBI" id="CHEBI:30616"/>
        <dbReference type="ChEBI" id="CHEBI:57865"/>
        <dbReference type="ChEBI" id="CHEBI:58223"/>
        <dbReference type="ChEBI" id="CHEBI:456216"/>
        <dbReference type="EC" id="2.7.4.22"/>
    </reaction>
</comment>
<comment type="activity regulation">
    <text evidence="1">Inhibited by UTP.</text>
</comment>
<comment type="pathway">
    <text evidence="1">Pyrimidine metabolism; CTP biosynthesis via de novo pathway; UDP from UMP (UMPK route): step 1/1.</text>
</comment>
<comment type="subunit">
    <text evidence="1">Homohexamer.</text>
</comment>
<comment type="subcellular location">
    <subcellularLocation>
        <location evidence="1">Cytoplasm</location>
    </subcellularLocation>
</comment>
<comment type="similarity">
    <text evidence="1">Belongs to the UMP kinase family.</text>
</comment>
<accession>Q83G72</accession>
<proteinExistence type="inferred from homology"/>
<dbReference type="EC" id="2.7.4.22" evidence="1"/>
<dbReference type="EMBL" id="AE014184">
    <property type="protein sequence ID" value="AAO44544.1"/>
    <property type="molecule type" value="Genomic_DNA"/>
</dbReference>
<dbReference type="RefSeq" id="WP_011096273.1">
    <property type="nucleotide sequence ID" value="NC_004572.3"/>
</dbReference>
<dbReference type="SMR" id="Q83G72"/>
<dbReference type="STRING" id="203267.TWT_447"/>
<dbReference type="GeneID" id="67388094"/>
<dbReference type="KEGG" id="twh:TWT_447"/>
<dbReference type="eggNOG" id="COG0528">
    <property type="taxonomic scope" value="Bacteria"/>
</dbReference>
<dbReference type="HOGENOM" id="CLU_033861_0_0_11"/>
<dbReference type="OrthoDB" id="9807458at2"/>
<dbReference type="UniPathway" id="UPA00159">
    <property type="reaction ID" value="UER00275"/>
</dbReference>
<dbReference type="Proteomes" id="UP000002200">
    <property type="component" value="Chromosome"/>
</dbReference>
<dbReference type="GO" id="GO:0005737">
    <property type="term" value="C:cytoplasm"/>
    <property type="evidence" value="ECO:0007669"/>
    <property type="project" value="UniProtKB-SubCell"/>
</dbReference>
<dbReference type="GO" id="GO:0005524">
    <property type="term" value="F:ATP binding"/>
    <property type="evidence" value="ECO:0007669"/>
    <property type="project" value="UniProtKB-KW"/>
</dbReference>
<dbReference type="GO" id="GO:0033862">
    <property type="term" value="F:UMP kinase activity"/>
    <property type="evidence" value="ECO:0007669"/>
    <property type="project" value="UniProtKB-EC"/>
</dbReference>
<dbReference type="GO" id="GO:0044210">
    <property type="term" value="P:'de novo' CTP biosynthetic process"/>
    <property type="evidence" value="ECO:0007669"/>
    <property type="project" value="UniProtKB-UniRule"/>
</dbReference>
<dbReference type="GO" id="GO:0006225">
    <property type="term" value="P:UDP biosynthetic process"/>
    <property type="evidence" value="ECO:0007669"/>
    <property type="project" value="TreeGrafter"/>
</dbReference>
<dbReference type="CDD" id="cd04254">
    <property type="entry name" value="AAK_UMPK-PyrH-Ec"/>
    <property type="match status" value="1"/>
</dbReference>
<dbReference type="FunFam" id="3.40.1160.10:FF:000001">
    <property type="entry name" value="Uridylate kinase"/>
    <property type="match status" value="1"/>
</dbReference>
<dbReference type="Gene3D" id="3.40.1160.10">
    <property type="entry name" value="Acetylglutamate kinase-like"/>
    <property type="match status" value="1"/>
</dbReference>
<dbReference type="HAMAP" id="MF_01220_B">
    <property type="entry name" value="PyrH_B"/>
    <property type="match status" value="1"/>
</dbReference>
<dbReference type="InterPro" id="IPR036393">
    <property type="entry name" value="AceGlu_kinase-like_sf"/>
</dbReference>
<dbReference type="InterPro" id="IPR001048">
    <property type="entry name" value="Asp/Glu/Uridylate_kinase"/>
</dbReference>
<dbReference type="InterPro" id="IPR011817">
    <property type="entry name" value="Uridylate_kinase"/>
</dbReference>
<dbReference type="InterPro" id="IPR015963">
    <property type="entry name" value="Uridylate_kinase_bac"/>
</dbReference>
<dbReference type="NCBIfam" id="TIGR02075">
    <property type="entry name" value="pyrH_bact"/>
    <property type="match status" value="1"/>
</dbReference>
<dbReference type="PANTHER" id="PTHR42833">
    <property type="entry name" value="URIDYLATE KINASE"/>
    <property type="match status" value="1"/>
</dbReference>
<dbReference type="PANTHER" id="PTHR42833:SF4">
    <property type="entry name" value="URIDYLATE KINASE PUMPKIN, CHLOROPLASTIC"/>
    <property type="match status" value="1"/>
</dbReference>
<dbReference type="Pfam" id="PF00696">
    <property type="entry name" value="AA_kinase"/>
    <property type="match status" value="1"/>
</dbReference>
<dbReference type="PIRSF" id="PIRSF005650">
    <property type="entry name" value="Uridylate_kin"/>
    <property type="match status" value="1"/>
</dbReference>
<dbReference type="SUPFAM" id="SSF53633">
    <property type="entry name" value="Carbamate kinase-like"/>
    <property type="match status" value="1"/>
</dbReference>
<name>PYRH_TROWT</name>
<reference key="1">
    <citation type="journal article" date="2003" name="Genome Res.">
        <title>Tropheryma whipplei twist: a human pathogenic Actinobacteria with a reduced genome.</title>
        <authorList>
            <person name="Raoult D."/>
            <person name="Ogata H."/>
            <person name="Audic S."/>
            <person name="Robert C."/>
            <person name="Suhre K."/>
            <person name="Drancourt M."/>
            <person name="Claverie J.-M."/>
        </authorList>
    </citation>
    <scope>NUCLEOTIDE SEQUENCE [LARGE SCALE GENOMIC DNA]</scope>
    <source>
        <strain>Twist</strain>
    </source>
</reference>
<evidence type="ECO:0000255" key="1">
    <source>
        <dbReference type="HAMAP-Rule" id="MF_01220"/>
    </source>
</evidence>
<sequence length="231" mass="24817">MASRRVLLKLSGESFGGGAPLVDPDVVSAIASEIVRVSKTIQIAIVVGGGNYFRGAELSRRGMARDRADYMGMLGTVINALALQDFLEQAGGDTRVQSAISMSQVAELYVPRRAERHLTKGRVVIFAAGAGMPYFSTDTVAVQRALEIKADIVLIAKNGVDGVYTDDPQINPNAKKIYKITYREALERGLRVVDSAALGLCMEHGLPMRVFGMESLRDAVSGLKVGTELSQ</sequence>
<protein>
    <recommendedName>
        <fullName evidence="1">Uridylate kinase</fullName>
        <shortName evidence="1">UK</shortName>
        <ecNumber evidence="1">2.7.4.22</ecNumber>
    </recommendedName>
    <alternativeName>
        <fullName evidence="1">Uridine monophosphate kinase</fullName>
        <shortName evidence="1">UMP kinase</shortName>
        <shortName evidence="1">UMPK</shortName>
    </alternativeName>
</protein>
<organism>
    <name type="scientific">Tropheryma whipplei (strain Twist)</name>
    <name type="common">Whipple's bacillus</name>
    <dbReference type="NCBI Taxonomy" id="203267"/>
    <lineage>
        <taxon>Bacteria</taxon>
        <taxon>Bacillati</taxon>
        <taxon>Actinomycetota</taxon>
        <taxon>Actinomycetes</taxon>
        <taxon>Micrococcales</taxon>
        <taxon>Tropherymataceae</taxon>
        <taxon>Tropheryma</taxon>
    </lineage>
</organism>